<accession>B0TQU4</accession>
<feature type="chain" id="PRO_1000074172" description="Phosphate acyltransferase">
    <location>
        <begin position="1"/>
        <end position="342"/>
    </location>
</feature>
<organism>
    <name type="scientific">Shewanella halifaxensis (strain HAW-EB4)</name>
    <dbReference type="NCBI Taxonomy" id="458817"/>
    <lineage>
        <taxon>Bacteria</taxon>
        <taxon>Pseudomonadati</taxon>
        <taxon>Pseudomonadota</taxon>
        <taxon>Gammaproteobacteria</taxon>
        <taxon>Alteromonadales</taxon>
        <taxon>Shewanellaceae</taxon>
        <taxon>Shewanella</taxon>
    </lineage>
</organism>
<comment type="function">
    <text evidence="1">Catalyzes the reversible formation of acyl-phosphate (acyl-PO(4)) from acyl-[acyl-carrier-protein] (acyl-ACP). This enzyme utilizes acyl-ACP as fatty acyl donor, but not acyl-CoA.</text>
</comment>
<comment type="catalytic activity">
    <reaction evidence="1">
        <text>a fatty acyl-[ACP] + phosphate = an acyl phosphate + holo-[ACP]</text>
        <dbReference type="Rhea" id="RHEA:42292"/>
        <dbReference type="Rhea" id="RHEA-COMP:9685"/>
        <dbReference type="Rhea" id="RHEA-COMP:14125"/>
        <dbReference type="ChEBI" id="CHEBI:43474"/>
        <dbReference type="ChEBI" id="CHEBI:59918"/>
        <dbReference type="ChEBI" id="CHEBI:64479"/>
        <dbReference type="ChEBI" id="CHEBI:138651"/>
        <dbReference type="EC" id="2.3.1.274"/>
    </reaction>
</comment>
<comment type="pathway">
    <text evidence="1">Lipid metabolism; phospholipid metabolism.</text>
</comment>
<comment type="subunit">
    <text evidence="1">Homodimer. Probably interacts with PlsY.</text>
</comment>
<comment type="subcellular location">
    <subcellularLocation>
        <location evidence="1">Cytoplasm</location>
    </subcellularLocation>
    <text evidence="1">Associated with the membrane possibly through PlsY.</text>
</comment>
<comment type="similarity">
    <text evidence="1">Belongs to the PlsX family.</text>
</comment>
<name>PLSX_SHEHH</name>
<evidence type="ECO:0000255" key="1">
    <source>
        <dbReference type="HAMAP-Rule" id="MF_00019"/>
    </source>
</evidence>
<reference key="1">
    <citation type="submission" date="2008-01" db="EMBL/GenBank/DDBJ databases">
        <title>Complete sequence of Shewanella halifaxensis HAW-EB4.</title>
        <authorList>
            <consortium name="US DOE Joint Genome Institute"/>
            <person name="Copeland A."/>
            <person name="Lucas S."/>
            <person name="Lapidus A."/>
            <person name="Glavina del Rio T."/>
            <person name="Dalin E."/>
            <person name="Tice H."/>
            <person name="Bruce D."/>
            <person name="Goodwin L."/>
            <person name="Pitluck S."/>
            <person name="Sims D."/>
            <person name="Brettin T."/>
            <person name="Detter J.C."/>
            <person name="Han C."/>
            <person name="Kuske C.R."/>
            <person name="Schmutz J."/>
            <person name="Larimer F."/>
            <person name="Land M."/>
            <person name="Hauser L."/>
            <person name="Kyrpides N."/>
            <person name="Kim E."/>
            <person name="Zhao J.-S."/>
            <person name="Richardson P."/>
        </authorList>
    </citation>
    <scope>NUCLEOTIDE SEQUENCE [LARGE SCALE GENOMIC DNA]</scope>
    <source>
        <strain>HAW-EB4</strain>
    </source>
</reference>
<proteinExistence type="inferred from homology"/>
<keyword id="KW-0963">Cytoplasm</keyword>
<keyword id="KW-0444">Lipid biosynthesis</keyword>
<keyword id="KW-0443">Lipid metabolism</keyword>
<keyword id="KW-0594">Phospholipid biosynthesis</keyword>
<keyword id="KW-1208">Phospholipid metabolism</keyword>
<keyword id="KW-0808">Transferase</keyword>
<dbReference type="EC" id="2.3.1.274" evidence="1"/>
<dbReference type="EMBL" id="CP000931">
    <property type="protein sequence ID" value="ABZ76339.1"/>
    <property type="molecule type" value="Genomic_DNA"/>
</dbReference>
<dbReference type="RefSeq" id="WP_012276874.1">
    <property type="nucleotide sequence ID" value="NC_010334.1"/>
</dbReference>
<dbReference type="SMR" id="B0TQU4"/>
<dbReference type="STRING" id="458817.Shal_1774"/>
<dbReference type="KEGG" id="shl:Shal_1774"/>
<dbReference type="eggNOG" id="COG0416">
    <property type="taxonomic scope" value="Bacteria"/>
</dbReference>
<dbReference type="HOGENOM" id="CLU_039379_1_0_6"/>
<dbReference type="OrthoDB" id="9806408at2"/>
<dbReference type="UniPathway" id="UPA00085"/>
<dbReference type="Proteomes" id="UP000001317">
    <property type="component" value="Chromosome"/>
</dbReference>
<dbReference type="GO" id="GO:0005737">
    <property type="term" value="C:cytoplasm"/>
    <property type="evidence" value="ECO:0007669"/>
    <property type="project" value="UniProtKB-SubCell"/>
</dbReference>
<dbReference type="GO" id="GO:0043811">
    <property type="term" value="F:phosphate:acyl-[acyl carrier protein] acyltransferase activity"/>
    <property type="evidence" value="ECO:0007669"/>
    <property type="project" value="UniProtKB-UniRule"/>
</dbReference>
<dbReference type="GO" id="GO:0006633">
    <property type="term" value="P:fatty acid biosynthetic process"/>
    <property type="evidence" value="ECO:0007669"/>
    <property type="project" value="UniProtKB-UniRule"/>
</dbReference>
<dbReference type="GO" id="GO:0008654">
    <property type="term" value="P:phospholipid biosynthetic process"/>
    <property type="evidence" value="ECO:0007669"/>
    <property type="project" value="UniProtKB-KW"/>
</dbReference>
<dbReference type="Gene3D" id="3.40.718.10">
    <property type="entry name" value="Isopropylmalate Dehydrogenase"/>
    <property type="match status" value="1"/>
</dbReference>
<dbReference type="HAMAP" id="MF_00019">
    <property type="entry name" value="PlsX"/>
    <property type="match status" value="1"/>
</dbReference>
<dbReference type="InterPro" id="IPR003664">
    <property type="entry name" value="FA_synthesis"/>
</dbReference>
<dbReference type="InterPro" id="IPR012281">
    <property type="entry name" value="Phospholipid_synth_PlsX-like"/>
</dbReference>
<dbReference type="NCBIfam" id="TIGR00182">
    <property type="entry name" value="plsX"/>
    <property type="match status" value="1"/>
</dbReference>
<dbReference type="PANTHER" id="PTHR30100">
    <property type="entry name" value="FATTY ACID/PHOSPHOLIPID SYNTHESIS PROTEIN PLSX"/>
    <property type="match status" value="1"/>
</dbReference>
<dbReference type="PANTHER" id="PTHR30100:SF1">
    <property type="entry name" value="PHOSPHATE ACYLTRANSFERASE"/>
    <property type="match status" value="1"/>
</dbReference>
<dbReference type="Pfam" id="PF02504">
    <property type="entry name" value="FA_synthesis"/>
    <property type="match status" value="1"/>
</dbReference>
<dbReference type="PIRSF" id="PIRSF002465">
    <property type="entry name" value="Phsphlp_syn_PlsX"/>
    <property type="match status" value="1"/>
</dbReference>
<dbReference type="SUPFAM" id="SSF53659">
    <property type="entry name" value="Isocitrate/Isopropylmalate dehydrogenase-like"/>
    <property type="match status" value="1"/>
</dbReference>
<protein>
    <recommendedName>
        <fullName evidence="1">Phosphate acyltransferase</fullName>
        <ecNumber evidence="1">2.3.1.274</ecNumber>
    </recommendedName>
    <alternativeName>
        <fullName evidence="1">Acyl-ACP phosphotransacylase</fullName>
    </alternativeName>
    <alternativeName>
        <fullName evidence="1">Acyl-[acyl-carrier-protein]--phosphate acyltransferase</fullName>
    </alternativeName>
    <alternativeName>
        <fullName evidence="1">Phosphate-acyl-ACP acyltransferase</fullName>
    </alternativeName>
</protein>
<sequence>MTNLTLALDAMGGDFGPRITVPATLQALRLNPLLKIVLVGDKSQIDEHLVSAEPAIKNRIEIKHTTEVVAMSDRPVHALRNRKQSSMRLAIELVRDGKAQACLSAGNTGALMAMSKVLLKTLPGIDRPALVTCLPAVNNTPVYLLDLGANISCDSETLFQFAVMGSVLSETVDKTASPKVALLNVGIEEIKGNDQVQQAGQLLQQIPQINYTGFIEGDEIYSGNVDVIVCDGFVGNITLKTSEGIARLLVHQLKKALGQGFFVRLLAKIIAPRIRSLLNQMNPDHYNGASLIGLRGIVVKSHGCADEAAFLQAITLAVTEAQRRLPQMIEDRLESILLDINS</sequence>
<gene>
    <name evidence="1" type="primary">plsX</name>
    <name type="ordered locus">Shal_1774</name>
</gene>